<sequence length="268" mass="29459">MGPWTLLLLHLPLVVSMLPAPTNVSIVSFNLEHTLTWLPGPETPDNTHFTVQSLRKNSWQLVKGCARLKTRQSCDLTNTFKDPFYHYKARVQAITTTQKSNRSLSMLFYPLTDTLLGPPVVSVSGCGNCPLLQVTPPTSRGLQRSLSPTQLYYRQFTCKVRRTRDGSQFSMWVTSTEKTVIGYLEPGAEYCVTVTPSTSFNPHSVPSEPHCAFTSPTAANTVPVVLSVLCAFSLLVVLLCGIVVYSGRLLCMHKPLPKTLSSVPLCGG</sequence>
<dbReference type="EMBL" id="JX532086">
    <property type="protein sequence ID" value="AGO14284.1"/>
    <property type="molecule type" value="mRNA"/>
</dbReference>
<dbReference type="EMBL" id="JX532087">
    <property type="protein sequence ID" value="AGO14285.1"/>
    <property type="molecule type" value="mRNA"/>
</dbReference>
<dbReference type="SMR" id="V5JFY4"/>
<dbReference type="Proteomes" id="UP000694395">
    <property type="component" value="Unplaced"/>
</dbReference>
<dbReference type="GO" id="GO:0005737">
    <property type="term" value="C:cytoplasm"/>
    <property type="evidence" value="ECO:0007669"/>
    <property type="project" value="UniProtKB-SubCell"/>
</dbReference>
<dbReference type="GO" id="GO:0016020">
    <property type="term" value="C:membrane"/>
    <property type="evidence" value="ECO:0000305"/>
    <property type="project" value="AgBase"/>
</dbReference>
<dbReference type="GO" id="GO:0005886">
    <property type="term" value="C:plasma membrane"/>
    <property type="evidence" value="ECO:0007669"/>
    <property type="project" value="UniProtKB-SubCell"/>
</dbReference>
<dbReference type="GO" id="GO:0004905">
    <property type="term" value="F:type I interferon receptor activity"/>
    <property type="evidence" value="ECO:0000315"/>
    <property type="project" value="AgBase"/>
</dbReference>
<dbReference type="GO" id="GO:0060337">
    <property type="term" value="P:type I interferon-mediated signaling pathway"/>
    <property type="evidence" value="ECO:0000315"/>
    <property type="project" value="AgBase"/>
</dbReference>
<dbReference type="FunFam" id="2.60.40.10:FF:003565">
    <property type="entry name" value="Interferon alpha/beta receptor 2"/>
    <property type="match status" value="1"/>
</dbReference>
<dbReference type="Gene3D" id="2.60.40.10">
    <property type="entry name" value="Immunoglobulins"/>
    <property type="match status" value="1"/>
</dbReference>
<dbReference type="InterPro" id="IPR003961">
    <property type="entry name" value="FN3_dom"/>
</dbReference>
<dbReference type="InterPro" id="IPR036116">
    <property type="entry name" value="FN3_sf"/>
</dbReference>
<dbReference type="InterPro" id="IPR013783">
    <property type="entry name" value="Ig-like_fold"/>
</dbReference>
<dbReference type="InterPro" id="IPR015373">
    <property type="entry name" value="Interferon/interleukin_rcp_dom"/>
</dbReference>
<dbReference type="InterPro" id="IPR050650">
    <property type="entry name" value="Type-II_Cytokine-TF_Rcpt"/>
</dbReference>
<dbReference type="PANTHER" id="PTHR20859">
    <property type="entry name" value="INTERFERON/INTERLEUKIN RECEPTOR"/>
    <property type="match status" value="1"/>
</dbReference>
<dbReference type="PANTHER" id="PTHR20859:SF53">
    <property type="entry name" value="INTERLEUKIN-22 RECEPTOR SUBUNIT ALPHA-1"/>
    <property type="match status" value="1"/>
</dbReference>
<dbReference type="Pfam" id="PF09294">
    <property type="entry name" value="Interfer-bind"/>
    <property type="match status" value="1"/>
</dbReference>
<dbReference type="Pfam" id="PF01108">
    <property type="entry name" value="Tissue_fac"/>
    <property type="match status" value="1"/>
</dbReference>
<dbReference type="SUPFAM" id="SSF49265">
    <property type="entry name" value="Fibronectin type III"/>
    <property type="match status" value="2"/>
</dbReference>
<dbReference type="PROSITE" id="PS50853">
    <property type="entry name" value="FN3"/>
    <property type="match status" value="2"/>
</dbReference>
<keyword id="KW-0025">Alternative splicing</keyword>
<keyword id="KW-1003">Cell membrane</keyword>
<keyword id="KW-0963">Cytoplasm</keyword>
<keyword id="KW-1015">Disulfide bond</keyword>
<keyword id="KW-0472">Membrane</keyword>
<keyword id="KW-0675">Receptor</keyword>
<keyword id="KW-0732">Signal</keyword>
<keyword id="KW-0812">Transmembrane</keyword>
<keyword id="KW-1133">Transmembrane helix</keyword>
<gene>
    <name evidence="5" type="primary">ifnar2</name>
</gene>
<protein>
    <recommendedName>
        <fullName>Interferon alpha/beta receptor 2</fullName>
    </recommendedName>
    <alternativeName>
        <fullName>Type I interferon receptor 2</fullName>
    </alternativeName>
</protein>
<organism evidence="8">
    <name type="scientific">Oncorhynchus mykiss</name>
    <name type="common">Rainbow trout</name>
    <name type="synonym">Salmo gairdneri</name>
    <dbReference type="NCBI Taxonomy" id="8022"/>
    <lineage>
        <taxon>Eukaryota</taxon>
        <taxon>Metazoa</taxon>
        <taxon>Chordata</taxon>
        <taxon>Craniata</taxon>
        <taxon>Vertebrata</taxon>
        <taxon>Euteleostomi</taxon>
        <taxon>Actinopterygii</taxon>
        <taxon>Neopterygii</taxon>
        <taxon>Teleostei</taxon>
        <taxon>Protacanthopterygii</taxon>
        <taxon>Salmoniformes</taxon>
        <taxon>Salmonidae</taxon>
        <taxon>Salmoninae</taxon>
        <taxon>Oncorhynchus</taxon>
    </lineage>
</organism>
<proteinExistence type="evidence at transcript level"/>
<feature type="signal peptide" evidence="2">
    <location>
        <begin position="1"/>
        <end position="16"/>
    </location>
</feature>
<feature type="chain" id="PRO_0000432618" description="Interferon alpha/beta receptor 2">
    <location>
        <begin position="17"/>
        <end position="268"/>
    </location>
</feature>
<feature type="topological domain" description="Extracellular" evidence="6">
    <location>
        <begin position="17"/>
        <end position="223"/>
    </location>
</feature>
<feature type="transmembrane region" description="Helical" evidence="2">
    <location>
        <begin position="224"/>
        <end position="244"/>
    </location>
</feature>
<feature type="topological domain" description="Cytoplasmic" evidence="6">
    <location>
        <begin position="245"/>
        <end position="268"/>
    </location>
</feature>
<feature type="domain" description="Fibronectin type-III 1" evidence="3">
    <location>
        <begin position="18"/>
        <end position="114"/>
    </location>
</feature>
<feature type="domain" description="Fibronectin type-III 2" evidence="3">
    <location>
        <begin position="115"/>
        <end position="217"/>
    </location>
</feature>
<feature type="disulfide bond" evidence="1">
    <location>
        <begin position="65"/>
        <end position="74"/>
    </location>
</feature>
<feature type="disulfide bond" evidence="1">
    <location>
        <begin position="191"/>
        <end position="211"/>
    </location>
</feature>
<feature type="splice variant" id="VSP_057534" description="In isoform 2." evidence="7">
    <location>
        <begin position="1"/>
        <end position="105"/>
    </location>
</feature>
<feature type="sequence conflict" description="In Ref. 1; AGO14285." evidence="6" ref="1">
    <original>P</original>
    <variation>L</variation>
    <location>
        <position position="130"/>
    </location>
</feature>
<accession>V5JFY4</accession>
<accession>V5JFP7</accession>
<comment type="function">
    <text evidence="1 4">Together with IFNAR1, forms the heterodimeric receptor for type I interferons (including interferons alpha, beta, epsilon, omega and kappa) (PubMed:24244163). Type I interferon binding activates the JAK-STAT signaling cascade, resulting in transcriptional activation or repression of interferon-regulated genes that encode the effectors of the interferon response. Mechanistically, type I interferon-binding brings the IFNAR1 and IFNAR2 subunits into close proximity with one another, driving their associated Janus kinases (JAKs) (TYK2 bound to IFNAR1 and JAK1 bound to IFNAR2) to cross-phosphorylate one another. The activated kinases phosphorylate specific tyrosine residues on the intracellular domains of IFNAR1 and IFNAR2, forming docking sites for the STAT transcription factors (STAT1, STAT2 and STAT). STAT proteins are then phosphorylated by the JAKs, promoting their translocation into the nucleus to regulate expression of interferon-regulated genes (By similarity).</text>
</comment>
<comment type="subunit">
    <text evidence="1">Heterodimer with IFNAR1; forming the receptor for type I interferon.</text>
</comment>
<comment type="subcellular location">
    <molecule>Isoform 1</molecule>
    <subcellularLocation>
        <location evidence="7">Cell membrane</location>
    </subcellularLocation>
</comment>
<comment type="subcellular location">
    <molecule>Isoform 2</molecule>
    <subcellularLocation>
        <location evidence="7">Cytoplasm</location>
    </subcellularLocation>
</comment>
<comment type="alternative products">
    <event type="alternative splicing"/>
    <isoform>
        <id>V5JFY4-1</id>
        <name>1</name>
        <name>Membrane-associated interferon receptor 2</name>
        <name evidence="5">mIFNAR2</name>
        <sequence type="displayed"/>
    </isoform>
    <isoform>
        <id>V5JFY4-2</id>
        <name>2</name>
        <name>Intracellular interferon receptor 2</name>
        <name evidence="5">iIFNAR2</name>
        <sequence type="described" ref="VSP_057534"/>
    </isoform>
</comment>
<comment type="induction">
    <text evidence="4">In the fibroblastic RTG-2 cell line, induced by polyinosine-polycytidylic acid (poly(I:C)), a synthetic analog of dsRNA, that binds TLR3.</text>
</comment>
<comment type="similarity">
    <text evidence="6">Belongs to the type II cytokine receptor family.</text>
</comment>
<reference key="1">
    <citation type="journal article" date="2013" name="PLoS Pathog.">
        <title>Intracellular interferons in fish: a unique means to combat viral infection.</title>
        <authorList>
            <person name="Chang M.X."/>
            <person name="Zou J."/>
            <person name="Nie P."/>
            <person name="Huang B."/>
            <person name="Yu Z."/>
            <person name="Collet B."/>
            <person name="Secombes C.J."/>
        </authorList>
    </citation>
    <scope>NUCLEOTIDE SEQUENCE [MRNA] (ISOFORMS 1 AND 2)</scope>
    <scope>INDUCTION BY POLY(I:C)</scope>
    <scope>FUNCTION</scope>
    <scope>SUBCELLULAR LOCATION</scope>
</reference>
<name>INRA2_ONCMY</name>
<evidence type="ECO:0000250" key="1">
    <source>
        <dbReference type="UniProtKB" id="P48551"/>
    </source>
</evidence>
<evidence type="ECO:0000255" key="2"/>
<evidence type="ECO:0000255" key="3">
    <source>
        <dbReference type="PROSITE-ProRule" id="PRU00316"/>
    </source>
</evidence>
<evidence type="ECO:0000269" key="4">
    <source>
    </source>
</evidence>
<evidence type="ECO:0000303" key="5">
    <source>
    </source>
</evidence>
<evidence type="ECO:0000305" key="6"/>
<evidence type="ECO:0000305" key="7">
    <source>
    </source>
</evidence>
<evidence type="ECO:0000312" key="8">
    <source>
        <dbReference type="EMBL" id="AGO14284.1"/>
    </source>
</evidence>